<keyword id="KW-0903">Direct protein sequencing</keyword>
<keyword id="KW-0520">NAD</keyword>
<keyword id="KW-0560">Oxidoreductase</keyword>
<keyword id="KW-1185">Reference proteome</keyword>
<keyword id="KW-0816">Tricarboxylic acid cycle</keyword>
<evidence type="ECO:0000255" key="1">
    <source>
        <dbReference type="HAMAP-Rule" id="MF_01517"/>
    </source>
</evidence>
<evidence type="ECO:0000269" key="2">
    <source>
    </source>
</evidence>
<gene>
    <name evidence="1" type="primary">mdh</name>
    <name type="ordered locus">Sfum_0460</name>
</gene>
<feature type="initiator methionine" description="Removed" evidence="2">
    <location>
        <position position="1"/>
    </location>
</feature>
<feature type="chain" id="PRO_0000292376" description="Malate dehydrogenase">
    <location>
        <begin position="2"/>
        <end position="329"/>
    </location>
</feature>
<feature type="active site" description="Proton acceptor" evidence="1">
    <location>
        <position position="190"/>
    </location>
</feature>
<feature type="binding site" evidence="1">
    <location>
        <begin position="12"/>
        <end position="18"/>
    </location>
    <ligand>
        <name>NAD(+)</name>
        <dbReference type="ChEBI" id="CHEBI:57540"/>
    </ligand>
</feature>
<feature type="binding site" evidence="1">
    <location>
        <position position="95"/>
    </location>
    <ligand>
        <name>substrate</name>
    </ligand>
</feature>
<feature type="binding site" evidence="1">
    <location>
        <position position="101"/>
    </location>
    <ligand>
        <name>substrate</name>
    </ligand>
</feature>
<feature type="binding site" evidence="1">
    <location>
        <position position="108"/>
    </location>
    <ligand>
        <name>NAD(+)</name>
        <dbReference type="ChEBI" id="CHEBI:57540"/>
    </ligand>
</feature>
<feature type="binding site" evidence="1">
    <location>
        <position position="115"/>
    </location>
    <ligand>
        <name>NAD(+)</name>
        <dbReference type="ChEBI" id="CHEBI:57540"/>
    </ligand>
</feature>
<feature type="binding site" evidence="1">
    <location>
        <begin position="132"/>
        <end position="134"/>
    </location>
    <ligand>
        <name>NAD(+)</name>
        <dbReference type="ChEBI" id="CHEBI:57540"/>
    </ligand>
</feature>
<feature type="binding site" evidence="1">
    <location>
        <position position="134"/>
    </location>
    <ligand>
        <name>substrate</name>
    </ligand>
</feature>
<feature type="binding site" evidence="1">
    <location>
        <position position="165"/>
    </location>
    <ligand>
        <name>substrate</name>
    </ligand>
</feature>
<accession>A0LFF8</accession>
<accession>P80648</accession>
<comment type="function">
    <text evidence="2">Catalyzes the reversible oxidation of malate to oxaloacetate. Catalyzes the reduction of oxaloacetate more efficiently than the oxidation of malate.</text>
</comment>
<comment type="catalytic activity">
    <reaction evidence="1 2">
        <text>(S)-malate + NAD(+) = oxaloacetate + NADH + H(+)</text>
        <dbReference type="Rhea" id="RHEA:21432"/>
        <dbReference type="ChEBI" id="CHEBI:15378"/>
        <dbReference type="ChEBI" id="CHEBI:15589"/>
        <dbReference type="ChEBI" id="CHEBI:16452"/>
        <dbReference type="ChEBI" id="CHEBI:57540"/>
        <dbReference type="ChEBI" id="CHEBI:57945"/>
        <dbReference type="EC" id="1.1.1.37"/>
    </reaction>
</comment>
<comment type="activity regulation">
    <text evidence="2">Substrate inhibition is observed at high concentrations of oxaloacetate.</text>
</comment>
<comment type="biophysicochemical properties">
    <kinetics>
        <KM evidence="2">50 uM for oxaloacetate (at 37 degrees Celsius and pH 7.5)</KM>
        <KM evidence="2">30 uM for NADH (at 37 degrees Celsius and pH 7.5)</KM>
        <KM evidence="2">4 mM for L-malate (at 37 degrees Celsius and pH 9.0)</KM>
        <KM evidence="2">1.1 mM for NAD (at 37 degrees Celsius and pH 9.0)</KM>
    </kinetics>
    <phDependence>
        <text evidence="2">Optimum pH is 8.5 with oxaloacetate as substrate.</text>
    </phDependence>
    <temperatureDependence>
        <text evidence="2">Optimum temperature is 60 degrees Celsius with oxaloacetate as substrate.</text>
    </temperatureDependence>
</comment>
<comment type="subunit">
    <text evidence="2">Homodimer.</text>
</comment>
<comment type="similarity">
    <text evidence="1">Belongs to the LDH/MDH superfamily. MDH type 2 family.</text>
</comment>
<sequence>MAKKPVRVTVTGAAGQIGYALLFRVASGQMLGPDQPIILQMLELPIDKVQAALKGVMMELEDCAFPLLADMIGTGDPKVAFKDSDYALLVGARPRGPGMERKDLLLENAKIFIEQGKAMNAVASRDIRVIVVGNPANTNAWIAMKSAPDLPKGNFTAMLRLDHNRAKSQLATRTGKPVASVEKMIVWGNHSPTMYPDIRFCTVDGQPAVKLVNDEAWYRNEYIPKVGKRGAAIIEARGLSSAASAANAAIDHMHDWALGTNGKWVTMGLPSDGSYGIPEGTMYGVPVTCTPGKYERVKGLEIDAFSREKMDFTLKELTEEQAGVKEMVK</sequence>
<protein>
    <recommendedName>
        <fullName evidence="1">Malate dehydrogenase</fullName>
        <ecNumber evidence="1">1.1.1.37</ecNumber>
    </recommendedName>
</protein>
<name>MDH_SYNFM</name>
<proteinExistence type="evidence at protein level"/>
<organism>
    <name type="scientific">Syntrophobacter fumaroxidans (strain DSM 10017 / MPOB)</name>
    <dbReference type="NCBI Taxonomy" id="335543"/>
    <lineage>
        <taxon>Bacteria</taxon>
        <taxon>Pseudomonadati</taxon>
        <taxon>Thermodesulfobacteriota</taxon>
        <taxon>Syntrophobacteria</taxon>
        <taxon>Syntrophobacterales</taxon>
        <taxon>Syntrophobacteraceae</taxon>
        <taxon>Syntrophobacter</taxon>
    </lineage>
</organism>
<reference key="1">
    <citation type="submission" date="2006-10" db="EMBL/GenBank/DDBJ databases">
        <title>Complete sequence of Syntrophobacter fumaroxidans MPOB.</title>
        <authorList>
            <consortium name="US DOE Joint Genome Institute"/>
            <person name="Copeland A."/>
            <person name="Lucas S."/>
            <person name="Lapidus A."/>
            <person name="Barry K."/>
            <person name="Detter J.C."/>
            <person name="Glavina del Rio T."/>
            <person name="Hammon N."/>
            <person name="Israni S."/>
            <person name="Pitluck S."/>
            <person name="Goltsman E.G."/>
            <person name="Martinez M."/>
            <person name="Schmutz J."/>
            <person name="Larimer F."/>
            <person name="Land M."/>
            <person name="Hauser L."/>
            <person name="Kyrpides N."/>
            <person name="Kim E."/>
            <person name="Boone D.R."/>
            <person name="Brockman F."/>
            <person name="Culley D."/>
            <person name="Ferry J."/>
            <person name="Gunsalus R."/>
            <person name="McInerney M.J."/>
            <person name="Morrison M."/>
            <person name="Plugge C."/>
            <person name="Rohlin L."/>
            <person name="Scholten J."/>
            <person name="Sieber J."/>
            <person name="Stams A.J.M."/>
            <person name="Worm P."/>
            <person name="Henstra A.M."/>
            <person name="Richardson P."/>
        </authorList>
    </citation>
    <scope>NUCLEOTIDE SEQUENCE [LARGE SCALE GENOMIC DNA]</scope>
    <source>
        <strain>DSM 10017 / MPOB</strain>
    </source>
</reference>
<reference key="2">
    <citation type="journal article" date="1996" name="FEMS Microbiol. Lett.">
        <title>Purification and characterization of malate dehydrogenase from the syntrophic propionate-oxidizing bacterium strain MPOB.</title>
        <authorList>
            <person name="van Kuijk B.L.M."/>
            <person name="Stams A.J.M."/>
        </authorList>
    </citation>
    <scope>PROTEIN SEQUENCE OF 2-22</scope>
    <scope>FUNCTION</scope>
    <scope>CATALYTIC ACTIVITY</scope>
    <scope>ACTIVITY REGULATION</scope>
    <scope>BIOPHYSICOCHEMICAL PROPERTIES</scope>
    <scope>SUBUNIT</scope>
</reference>
<dbReference type="EC" id="1.1.1.37" evidence="1"/>
<dbReference type="EMBL" id="CP000478">
    <property type="protein sequence ID" value="ABK16160.1"/>
    <property type="molecule type" value="Genomic_DNA"/>
</dbReference>
<dbReference type="RefSeq" id="WP_011697333.1">
    <property type="nucleotide sequence ID" value="NC_008554.1"/>
</dbReference>
<dbReference type="SMR" id="A0LFF8"/>
<dbReference type="FunCoup" id="A0LFF8">
    <property type="interactions" value="505"/>
</dbReference>
<dbReference type="STRING" id="335543.Sfum_0460"/>
<dbReference type="KEGG" id="sfu:Sfum_0460"/>
<dbReference type="eggNOG" id="COG0039">
    <property type="taxonomic scope" value="Bacteria"/>
</dbReference>
<dbReference type="HOGENOM" id="CLU_040727_2_0_7"/>
<dbReference type="InParanoid" id="A0LFF8"/>
<dbReference type="OrthoDB" id="9802969at2"/>
<dbReference type="Proteomes" id="UP000001784">
    <property type="component" value="Chromosome"/>
</dbReference>
<dbReference type="GO" id="GO:0030060">
    <property type="term" value="F:L-malate dehydrogenase (NAD+) activity"/>
    <property type="evidence" value="ECO:0007669"/>
    <property type="project" value="UniProtKB-UniRule"/>
</dbReference>
<dbReference type="GO" id="GO:0006108">
    <property type="term" value="P:malate metabolic process"/>
    <property type="evidence" value="ECO:0007669"/>
    <property type="project" value="InterPro"/>
</dbReference>
<dbReference type="GO" id="GO:0006099">
    <property type="term" value="P:tricarboxylic acid cycle"/>
    <property type="evidence" value="ECO:0007669"/>
    <property type="project" value="UniProtKB-UniRule"/>
</dbReference>
<dbReference type="CDD" id="cd01338">
    <property type="entry name" value="MDH_chloroplast-like"/>
    <property type="match status" value="1"/>
</dbReference>
<dbReference type="FunFam" id="3.40.50.720:FF:000010">
    <property type="entry name" value="Malate dehydrogenase"/>
    <property type="match status" value="1"/>
</dbReference>
<dbReference type="FunFam" id="3.90.110.10:FF:000002">
    <property type="entry name" value="Malate dehydrogenase"/>
    <property type="match status" value="1"/>
</dbReference>
<dbReference type="Gene3D" id="3.90.110.10">
    <property type="entry name" value="Lactate dehydrogenase/glycoside hydrolase, family 4, C-terminal"/>
    <property type="match status" value="1"/>
</dbReference>
<dbReference type="Gene3D" id="3.40.50.720">
    <property type="entry name" value="NAD(P)-binding Rossmann-like Domain"/>
    <property type="match status" value="1"/>
</dbReference>
<dbReference type="HAMAP" id="MF_01517">
    <property type="entry name" value="Malate_dehydrog_2"/>
    <property type="match status" value="1"/>
</dbReference>
<dbReference type="InterPro" id="IPR001557">
    <property type="entry name" value="L-lactate/malate_DH"/>
</dbReference>
<dbReference type="InterPro" id="IPR022383">
    <property type="entry name" value="Lactate/malate_DH_C"/>
</dbReference>
<dbReference type="InterPro" id="IPR001236">
    <property type="entry name" value="Lactate/malate_DH_N"/>
</dbReference>
<dbReference type="InterPro" id="IPR015955">
    <property type="entry name" value="Lactate_DH/Glyco_Ohase_4_C"/>
</dbReference>
<dbReference type="InterPro" id="IPR010945">
    <property type="entry name" value="Malate_DH_type2"/>
</dbReference>
<dbReference type="InterPro" id="IPR036291">
    <property type="entry name" value="NAD(P)-bd_dom_sf"/>
</dbReference>
<dbReference type="NCBIfam" id="TIGR01759">
    <property type="entry name" value="MalateDH-SF1"/>
    <property type="match status" value="1"/>
</dbReference>
<dbReference type="NCBIfam" id="NF003916">
    <property type="entry name" value="PRK05442.1"/>
    <property type="match status" value="1"/>
</dbReference>
<dbReference type="PANTHER" id="PTHR23382">
    <property type="entry name" value="MALATE DEHYDROGENASE"/>
    <property type="match status" value="1"/>
</dbReference>
<dbReference type="Pfam" id="PF02866">
    <property type="entry name" value="Ldh_1_C"/>
    <property type="match status" value="1"/>
</dbReference>
<dbReference type="Pfam" id="PF00056">
    <property type="entry name" value="Ldh_1_N"/>
    <property type="match status" value="1"/>
</dbReference>
<dbReference type="PIRSF" id="PIRSF000102">
    <property type="entry name" value="Lac_mal_DH"/>
    <property type="match status" value="1"/>
</dbReference>
<dbReference type="SUPFAM" id="SSF56327">
    <property type="entry name" value="LDH C-terminal domain-like"/>
    <property type="match status" value="1"/>
</dbReference>
<dbReference type="SUPFAM" id="SSF51735">
    <property type="entry name" value="NAD(P)-binding Rossmann-fold domains"/>
    <property type="match status" value="1"/>
</dbReference>